<evidence type="ECO:0000255" key="1">
    <source>
        <dbReference type="HAMAP-Rule" id="MF_00358"/>
    </source>
</evidence>
<evidence type="ECO:0000256" key="2">
    <source>
        <dbReference type="SAM" id="MobiDB-lite"/>
    </source>
</evidence>
<evidence type="ECO:0000305" key="3"/>
<gene>
    <name evidence="1" type="primary">rpsU</name>
    <name type="ordered locus">Pmen_4026</name>
</gene>
<name>RS21_ECTM1</name>
<protein>
    <recommendedName>
        <fullName evidence="1">Small ribosomal subunit protein bS21</fullName>
    </recommendedName>
    <alternativeName>
        <fullName evidence="3">30S ribosomal protein S21</fullName>
    </alternativeName>
</protein>
<reference key="1">
    <citation type="submission" date="2007-04" db="EMBL/GenBank/DDBJ databases">
        <title>Complete sequence of Pseudomonas mendocina ymp.</title>
        <authorList>
            <consortium name="US DOE Joint Genome Institute"/>
            <person name="Copeland A."/>
            <person name="Lucas S."/>
            <person name="Lapidus A."/>
            <person name="Barry K."/>
            <person name="Glavina del Rio T."/>
            <person name="Dalin E."/>
            <person name="Tice H."/>
            <person name="Pitluck S."/>
            <person name="Kiss H."/>
            <person name="Brettin T."/>
            <person name="Detter J.C."/>
            <person name="Bruce D."/>
            <person name="Han C."/>
            <person name="Schmutz J."/>
            <person name="Larimer F."/>
            <person name="Land M."/>
            <person name="Hauser L."/>
            <person name="Kyrpides N."/>
            <person name="Mikhailova N."/>
            <person name="Hersman L."/>
            <person name="Dubois J."/>
            <person name="Maurice P."/>
            <person name="Richardson P."/>
        </authorList>
    </citation>
    <scope>NUCLEOTIDE SEQUENCE [LARGE SCALE GENOMIC DNA]</scope>
    <source>
        <strain>ymp</strain>
    </source>
</reference>
<accession>A4XZK7</accession>
<feature type="chain" id="PRO_1000005157" description="Small ribosomal subunit protein bS21">
    <location>
        <begin position="1"/>
        <end position="71"/>
    </location>
</feature>
<feature type="region of interest" description="Disordered" evidence="2">
    <location>
        <begin position="49"/>
        <end position="71"/>
    </location>
</feature>
<feature type="compositionally biased region" description="Basic residues" evidence="2">
    <location>
        <begin position="49"/>
        <end position="59"/>
    </location>
</feature>
<feature type="compositionally biased region" description="Basic and acidic residues" evidence="2">
    <location>
        <begin position="60"/>
        <end position="71"/>
    </location>
</feature>
<sequence>MPAVKVKENEPFDVALRRFKRSCEKAGVLAEVRSREFYEKPTAERKRKAAAAVKRHAKKVQREQRRSVRLY</sequence>
<organism>
    <name type="scientific">Ectopseudomonas mendocina (strain ymp)</name>
    <name type="common">Pseudomonas mendocina</name>
    <dbReference type="NCBI Taxonomy" id="399739"/>
    <lineage>
        <taxon>Bacteria</taxon>
        <taxon>Pseudomonadati</taxon>
        <taxon>Pseudomonadota</taxon>
        <taxon>Gammaproteobacteria</taxon>
        <taxon>Pseudomonadales</taxon>
        <taxon>Pseudomonadaceae</taxon>
        <taxon>Ectopseudomonas</taxon>
    </lineage>
</organism>
<keyword id="KW-0687">Ribonucleoprotein</keyword>
<keyword id="KW-0689">Ribosomal protein</keyword>
<dbReference type="EMBL" id="CP000680">
    <property type="protein sequence ID" value="ABP86773.1"/>
    <property type="molecule type" value="Genomic_DNA"/>
</dbReference>
<dbReference type="SMR" id="A4XZK7"/>
<dbReference type="STRING" id="399739.Pmen_4026"/>
<dbReference type="KEGG" id="pmy:Pmen_4026"/>
<dbReference type="eggNOG" id="COG0828">
    <property type="taxonomic scope" value="Bacteria"/>
</dbReference>
<dbReference type="HOGENOM" id="CLU_159258_1_0_6"/>
<dbReference type="OrthoDB" id="9799244at2"/>
<dbReference type="GO" id="GO:1990904">
    <property type="term" value="C:ribonucleoprotein complex"/>
    <property type="evidence" value="ECO:0007669"/>
    <property type="project" value="UniProtKB-KW"/>
</dbReference>
<dbReference type="GO" id="GO:0005840">
    <property type="term" value="C:ribosome"/>
    <property type="evidence" value="ECO:0007669"/>
    <property type="project" value="UniProtKB-KW"/>
</dbReference>
<dbReference type="GO" id="GO:0003735">
    <property type="term" value="F:structural constituent of ribosome"/>
    <property type="evidence" value="ECO:0007669"/>
    <property type="project" value="InterPro"/>
</dbReference>
<dbReference type="GO" id="GO:0006412">
    <property type="term" value="P:translation"/>
    <property type="evidence" value="ECO:0007669"/>
    <property type="project" value="UniProtKB-UniRule"/>
</dbReference>
<dbReference type="Gene3D" id="1.20.5.1150">
    <property type="entry name" value="Ribosomal protein S8"/>
    <property type="match status" value="1"/>
</dbReference>
<dbReference type="HAMAP" id="MF_00358">
    <property type="entry name" value="Ribosomal_bS21"/>
    <property type="match status" value="1"/>
</dbReference>
<dbReference type="InterPro" id="IPR001911">
    <property type="entry name" value="Ribosomal_bS21"/>
</dbReference>
<dbReference type="InterPro" id="IPR018278">
    <property type="entry name" value="Ribosomal_bS21_CS"/>
</dbReference>
<dbReference type="InterPro" id="IPR038380">
    <property type="entry name" value="Ribosomal_bS21_sf"/>
</dbReference>
<dbReference type="NCBIfam" id="TIGR00030">
    <property type="entry name" value="S21p"/>
    <property type="match status" value="1"/>
</dbReference>
<dbReference type="PANTHER" id="PTHR21109">
    <property type="entry name" value="MITOCHONDRIAL 28S RIBOSOMAL PROTEIN S21"/>
    <property type="match status" value="1"/>
</dbReference>
<dbReference type="PANTHER" id="PTHR21109:SF22">
    <property type="entry name" value="SMALL RIBOSOMAL SUBUNIT PROTEIN BS21"/>
    <property type="match status" value="1"/>
</dbReference>
<dbReference type="Pfam" id="PF01165">
    <property type="entry name" value="Ribosomal_S21"/>
    <property type="match status" value="1"/>
</dbReference>
<dbReference type="PRINTS" id="PR00976">
    <property type="entry name" value="RIBOSOMALS21"/>
</dbReference>
<dbReference type="PROSITE" id="PS01181">
    <property type="entry name" value="RIBOSOMAL_S21"/>
    <property type="match status" value="1"/>
</dbReference>
<comment type="similarity">
    <text evidence="1">Belongs to the bacterial ribosomal protein bS21 family.</text>
</comment>
<proteinExistence type="inferred from homology"/>